<gene>
    <name type="primary">SLC4A4</name>
    <name type="synonym">NBC1</name>
    <name type="synonym">NBCE1</name>
</gene>
<organism>
    <name type="scientific">Sus scrofa</name>
    <name type="common">Pig</name>
    <dbReference type="NCBI Taxonomy" id="9823"/>
    <lineage>
        <taxon>Eukaryota</taxon>
        <taxon>Metazoa</taxon>
        <taxon>Chordata</taxon>
        <taxon>Craniata</taxon>
        <taxon>Vertebrata</taxon>
        <taxon>Euteleostomi</taxon>
        <taxon>Mammalia</taxon>
        <taxon>Eutheria</taxon>
        <taxon>Laurasiatheria</taxon>
        <taxon>Artiodactyla</taxon>
        <taxon>Suina</taxon>
        <taxon>Suidae</taxon>
        <taxon>Sus</taxon>
    </lineage>
</organism>
<comment type="function">
    <text evidence="5">Electrogenic sodium/bicarbonate cotransporter with a Na(+):HCO3(-) stoichiometry varying from 1:2 to 1:3. May regulate bicarbonate influx/efflux at the basolateral membrane of cells and regulate intracellular pH.</text>
</comment>
<comment type="catalytic activity">
    <reaction evidence="5">
        <text>2 hydrogencarbonate(out) + Na(+)(out) = 2 hydrogencarbonate(in) + Na(+)(in)</text>
        <dbReference type="Rhea" id="RHEA:72215"/>
        <dbReference type="ChEBI" id="CHEBI:17544"/>
        <dbReference type="ChEBI" id="CHEBI:29101"/>
    </reaction>
</comment>
<comment type="catalytic activity">
    <reaction evidence="5">
        <text>3 hydrogencarbonate(out) + Na(+)(out) = 3 hydrogencarbonate(in) + Na(+)(in)</text>
        <dbReference type="Rhea" id="RHEA:72219"/>
        <dbReference type="ChEBI" id="CHEBI:17544"/>
        <dbReference type="ChEBI" id="CHEBI:29101"/>
    </reaction>
</comment>
<comment type="subunit">
    <text evidence="2 3 5">Homodimer. Interacts with CA2/carbonic anhydrase 2 and CA4/carbonic anhydrase 4 which may regulate transporter activity. Isoform 1 but not isoform 2 interacts with AHCYL1 (via PEST domain when phosphorylated); the interaction increases SLC4A4 isoform 1 activity. Interacts with AHCYL2.</text>
</comment>
<comment type="subcellular location">
    <subcellularLocation>
        <location evidence="5">Basolateral cell membrane</location>
        <topology>Multi-pass membrane protein</topology>
    </subcellularLocation>
    <subcellularLocation>
        <location evidence="5">Cell membrane</location>
        <topology evidence="6">Multi-pass membrane protein</topology>
    </subcellularLocation>
</comment>
<comment type="alternative products">
    <event type="alternative splicing"/>
    <isoform>
        <id>Q4U116-1</id>
        <name>1</name>
        <name>NBCe1B</name>
        <name>pNBC1</name>
        <sequence type="displayed"/>
    </isoform>
    <isoform>
        <id>Q4U116-2</id>
        <name>2</name>
        <name>kNBC1</name>
        <name>NBCe1A</name>
        <sequence type="described" ref="VSP_016713 VSP_016714"/>
    </isoform>
</comment>
<comment type="tissue specificity">
    <text evidence="8">Expressed in vas deferens epithelia (at protein level).</text>
</comment>
<comment type="PTM">
    <text evidence="2 5">Phosphorylation of Ser-1026 by PKA increases the binding of CA2 and changes the Na(+):HCO3(-) stoichiometry of the transporter from 3:1 to 2:1. Phosphorylated in presence of STK39 and dephosphorylated in presence of PP1 phosphatase; phosphorylation seems to inhibit SLC4A4 activity.</text>
</comment>
<comment type="PTM">
    <text evidence="5">N-glycosylated. May not be necessary for the transporter basic functions.</text>
</comment>
<comment type="similarity">
    <text evidence="10">Belongs to the anion exchanger (TC 2.A.31) family.</text>
</comment>
<sequence>MEDEAALDRGASFLKHVCDEEEVEGHHTIYIGVHVPKSYRRRRRHKRKAGHREKKEKERVSENYSDKSDVENADESSSSILKPLISPAAERIRFILGEEDDSPAPPQLFTELDELLAVDGQEMEWKETARWIKFEEKVEQGGERWSKPHVATLSLHSLFELRTCMEKGSIMLDREAASLPQLVEMIVDHQIETGLLKPDLKDKVTYTLLRKHRHQTKKSNLRSLADIGKTVSSASRMFTSPENGSPAMTHRNLTSSSLNDISDKPEKDQLKNKFMKKLPRDAEASNVLVGEVDFLDSPFIAFVRLQQAVMLGALTEVPVPTRFLFILLGPKGKAKSYHEIGRAIATLMSDEVFHDIAYKAKDRQDLIAGIDEFLDEVIVLPPGEWDPAIRIEPPKSLPSSDKRKNMYSGGENVQMNGDTPHDGGHGGGGHADCEELQRTGRFCGGLIKDIKRKAPFFASDFYDALNIQALSAILFIYLATVTNAITFGGLLGDATDNMQGVLESFLGTAVSGAVFCLFAGQPLTILSSTGPVLVFERLLFNFSKDHNFDYLEFRLWIGLWSAFLCLILVATDASFLVQYFTRFTEEGFSSLISFIFIYDAFKKMIKLADYYPINSNFKVGYNTQFSCVCVPPNPVNISVSNDTTLAPEDLQTVSSADMYHNATFDWALLTKKECLKYEGKLVGNNCDFVPDITLMSFILFLGTYTSSMALKKFKTSRYFPTTARKLISDFAIILSILIFCVIDALVGVDTPKLIVPSEFKPTSPNRGWFVPPFGGNPWWVYLAAAIPALLVTILIFMDQQITAVIVNRKEHKLKKGAGYHLDLFWVAILMVVCSFMALPWYVAATVISIAHIDSLKMETETSAPGEQPKFLGVREQRVTGTLVFILTGLSVFMAPILKFIPMPVLYGVFLYMGVASLNGVQFMDRLKLLLMPLKHQPDFIYLRHVPLRRVHLFTFLQVLCLALLWILKSTVAAIIFPVMILALVAVRKGMDYLFSQHDLSFLDDVIPEKDKKKKEDEKKKKKKKGSLDSDSDDSDCPYSEKVPSIKIPMDIMEQQPFLSDSKPSDRERSPTFLERHTSC</sequence>
<proteinExistence type="evidence at protein level"/>
<evidence type="ECO:0000250" key="1"/>
<evidence type="ECO:0000250" key="2">
    <source>
        <dbReference type="UniProtKB" id="O88343"/>
    </source>
</evidence>
<evidence type="ECO:0000250" key="3">
    <source>
        <dbReference type="UniProtKB" id="Q9GL77"/>
    </source>
</evidence>
<evidence type="ECO:0000250" key="4">
    <source>
        <dbReference type="UniProtKB" id="Q9JI66"/>
    </source>
</evidence>
<evidence type="ECO:0000250" key="5">
    <source>
        <dbReference type="UniProtKB" id="Q9Y6R1"/>
    </source>
</evidence>
<evidence type="ECO:0000255" key="6"/>
<evidence type="ECO:0000256" key="7">
    <source>
        <dbReference type="SAM" id="MobiDB-lite"/>
    </source>
</evidence>
<evidence type="ECO:0000269" key="8">
    <source>
    </source>
</evidence>
<evidence type="ECO:0000303" key="9">
    <source ref="1"/>
</evidence>
<evidence type="ECO:0000305" key="10"/>
<feature type="chain" id="PRO_0000079229" description="Electrogenic sodium bicarbonate cotransporter 1">
    <location>
        <begin position="1"/>
        <end position="1079"/>
    </location>
</feature>
<feature type="topological domain" description="Cytoplasmic" evidence="5">
    <location>
        <begin position="1"/>
        <end position="466"/>
    </location>
</feature>
<feature type="transmembrane region" description="Helical; Name=1" evidence="5">
    <location>
        <begin position="467"/>
        <end position="491"/>
    </location>
</feature>
<feature type="topological domain" description="Extracellular" evidence="5">
    <location>
        <begin position="492"/>
        <end position="501"/>
    </location>
</feature>
<feature type="transmembrane region" description="Helical; Name=2" evidence="5">
    <location>
        <begin position="502"/>
        <end position="520"/>
    </location>
</feature>
<feature type="topological domain" description="Cytoplasmic" evidence="5">
    <location>
        <position position="521"/>
    </location>
</feature>
<feature type="transmembrane region" description="Discontinuously helical; Name=3" evidence="5">
    <location>
        <begin position="522"/>
        <end position="542"/>
    </location>
</feature>
<feature type="topological domain" description="Extracellular" evidence="5">
    <location>
        <begin position="543"/>
        <end position="550"/>
    </location>
</feature>
<feature type="transmembrane region" description="Helical; Name=4" evidence="5">
    <location>
        <begin position="551"/>
        <end position="571"/>
    </location>
</feature>
<feature type="topological domain" description="Cytoplasmic" evidence="5">
    <location>
        <begin position="572"/>
        <end position="585"/>
    </location>
</feature>
<feature type="transmembrane region" description="Helical; Name=5" evidence="5">
    <location>
        <begin position="586"/>
        <end position="609"/>
    </location>
</feature>
<feature type="topological domain" description="Extracellular" evidence="5">
    <location>
        <begin position="610"/>
        <end position="692"/>
    </location>
</feature>
<feature type="transmembrane region" description="Helical; Name=6" evidence="5">
    <location>
        <begin position="693"/>
        <end position="710"/>
    </location>
</feature>
<feature type="topological domain" description="Cytoplasmic" evidence="5">
    <location>
        <begin position="711"/>
        <end position="725"/>
    </location>
</feature>
<feature type="transmembrane region" description="Helical; Name=7" evidence="5">
    <location>
        <begin position="726"/>
        <end position="745"/>
    </location>
</feature>
<feature type="topological domain" description="Extracellular" evidence="5">
    <location>
        <begin position="746"/>
        <end position="779"/>
    </location>
</feature>
<feature type="transmembrane region" description="Helical; Name=8" evidence="5">
    <location>
        <begin position="780"/>
        <end position="807"/>
    </location>
</feature>
<feature type="topological domain" description="Cytoplasmic" evidence="5">
    <location>
        <begin position="808"/>
        <end position="819"/>
    </location>
</feature>
<feature type="transmembrane region" description="Helical; Name=9" evidence="5">
    <location>
        <begin position="820"/>
        <end position="836"/>
    </location>
</feature>
<feature type="topological domain" description="Extracellular" evidence="5">
    <location>
        <position position="837"/>
    </location>
</feature>
<feature type="transmembrane region" description="Discontinuously helical; Name=10" evidence="5">
    <location>
        <begin position="838"/>
        <end position="855"/>
    </location>
</feature>
<feature type="topological domain" description="Cytoplasmic" evidence="5">
    <location>
        <begin position="856"/>
        <end position="877"/>
    </location>
</feature>
<feature type="transmembrane region" description="Helical; Name=11" evidence="5">
    <location>
        <begin position="878"/>
        <end position="894"/>
    </location>
</feature>
<feature type="topological domain" description="Extracellular" evidence="5">
    <location>
        <begin position="895"/>
        <end position="901"/>
    </location>
</feature>
<feature type="transmembrane region" description="Helical; Name=12" evidence="5">
    <location>
        <begin position="902"/>
        <end position="918"/>
    </location>
</feature>
<feature type="topological domain" description="Cytoplasmic" evidence="5">
    <location>
        <begin position="919"/>
        <end position="960"/>
    </location>
</feature>
<feature type="intramembrane region" description="Discontinuously helical" evidence="5">
    <location>
        <begin position="961"/>
        <end position="986"/>
    </location>
</feature>
<feature type="topological domain" description="Cytoplasmic" evidence="5">
    <location>
        <begin position="987"/>
        <end position="1079"/>
    </location>
</feature>
<feature type="region of interest" description="Required for interaction with AHCYL1" evidence="5">
    <location>
        <begin position="1"/>
        <end position="62"/>
    </location>
</feature>
<feature type="region of interest" description="Disordered" evidence="7">
    <location>
        <begin position="39"/>
        <end position="78"/>
    </location>
</feature>
<feature type="region of interest" description="Disordered" evidence="7">
    <location>
        <begin position="238"/>
        <end position="265"/>
    </location>
</feature>
<feature type="region of interest" description="Interaction with CA4" evidence="1">
    <location>
        <begin position="748"/>
        <end position="779"/>
    </location>
</feature>
<feature type="region of interest" description="CA2-binding" evidence="1">
    <location>
        <begin position="1002"/>
        <end position="1004"/>
    </location>
</feature>
<feature type="region of interest" description="Disordered" evidence="7">
    <location>
        <begin position="1012"/>
        <end position="1079"/>
    </location>
</feature>
<feature type="region of interest" description="CA2-binding" evidence="1">
    <location>
        <begin position="1030"/>
        <end position="1033"/>
    </location>
</feature>
<feature type="region of interest" description="Required for basolateral targeting" evidence="1">
    <location>
        <begin position="1057"/>
        <end position="1059"/>
    </location>
</feature>
<feature type="compositionally biased region" description="Basic residues" evidence="7">
    <location>
        <begin position="39"/>
        <end position="52"/>
    </location>
</feature>
<feature type="compositionally biased region" description="Basic and acidic residues" evidence="7">
    <location>
        <begin position="53"/>
        <end position="70"/>
    </location>
</feature>
<feature type="compositionally biased region" description="Polar residues" evidence="7">
    <location>
        <begin position="251"/>
        <end position="260"/>
    </location>
</feature>
<feature type="compositionally biased region" description="Basic and acidic residues" evidence="7">
    <location>
        <begin position="1062"/>
        <end position="1079"/>
    </location>
</feature>
<feature type="modified residue" description="Phosphotyrosine" evidence="2">
    <location>
        <position position="30"/>
    </location>
</feature>
<feature type="modified residue" description="Phosphoserine" evidence="2">
    <location>
        <position position="61"/>
    </location>
</feature>
<feature type="modified residue" description="Phosphoserine" evidence="2">
    <location>
        <position position="65"/>
    </location>
</feature>
<feature type="modified residue" description="Phosphoserine" evidence="2">
    <location>
        <position position="68"/>
    </location>
</feature>
<feature type="modified residue" description="Phosphoserine" evidence="2">
    <location>
        <position position="223"/>
    </location>
</feature>
<feature type="modified residue" description="Phosphoserine" evidence="2">
    <location>
        <position position="232"/>
    </location>
</feature>
<feature type="modified residue" description="Phosphoserine" evidence="2">
    <location>
        <position position="233"/>
    </location>
</feature>
<feature type="modified residue" description="Phosphoserine" evidence="2">
    <location>
        <position position="245"/>
    </location>
</feature>
<feature type="modified residue" description="Phosphothreonine" evidence="4">
    <location>
        <position position="249"/>
    </location>
</feature>
<feature type="modified residue" description="Phosphothreonine" evidence="5">
    <location>
        <position position="254"/>
    </location>
</feature>
<feature type="modified residue" description="Phosphoserine" evidence="2">
    <location>
        <position position="256"/>
    </location>
</feature>
<feature type="modified residue" description="Phosphoserine" evidence="5">
    <location>
        <position position="257"/>
    </location>
</feature>
<feature type="modified residue" description="Phosphoserine" evidence="2">
    <location>
        <position position="262"/>
    </location>
</feature>
<feature type="modified residue" description="Phosphoserine; by PKA" evidence="5">
    <location>
        <position position="1026"/>
    </location>
</feature>
<feature type="modified residue" description="Phosphoserine" evidence="2">
    <location>
        <position position="1029"/>
    </location>
</feature>
<feature type="modified residue" description="Phosphoserine" evidence="5">
    <location>
        <position position="1034"/>
    </location>
</feature>
<feature type="modified residue" description="Phosphoserine" evidence="2">
    <location>
        <position position="1044"/>
    </location>
</feature>
<feature type="modified residue" description="Phosphoserine" evidence="4">
    <location>
        <position position="1069"/>
    </location>
</feature>
<feature type="splice variant" id="VSP_016713" description="In isoform 2." evidence="9">
    <location>
        <begin position="1"/>
        <end position="44"/>
    </location>
</feature>
<feature type="splice variant" id="VSP_016714" description="In isoform 2." evidence="9">
    <original>HKRKAGHREKKEKERVSENYSDKSDVENADESSSSILKPLI</original>
    <variation>MSTESVEGKSNSSGDRGRARSYSFLRVVQPMFNHSIFTSAV</variation>
    <location>
        <begin position="45"/>
        <end position="85"/>
    </location>
</feature>
<accession>Q4U116</accession>
<accession>Q4U115</accession>
<accession>Q5EC51</accession>
<accession>Q5EC52</accession>
<accession>Q864R7</accession>
<dbReference type="EMBL" id="AY911643">
    <property type="protein sequence ID" value="AAX09639.2"/>
    <property type="molecule type" value="mRNA"/>
</dbReference>
<dbReference type="EMBL" id="AY911644">
    <property type="protein sequence ID" value="AAX09640.1"/>
    <property type="molecule type" value="mRNA"/>
</dbReference>
<dbReference type="EMBL" id="DQ020174">
    <property type="protein sequence ID" value="AAY43214.1"/>
    <property type="molecule type" value="mRNA"/>
</dbReference>
<dbReference type="EMBL" id="DQ020175">
    <property type="protein sequence ID" value="AAY43215.1"/>
    <property type="molecule type" value="mRNA"/>
</dbReference>
<dbReference type="EMBL" id="AY253302">
    <property type="protein sequence ID" value="AAP03886.1"/>
    <property type="molecule type" value="mRNA"/>
</dbReference>
<dbReference type="RefSeq" id="NP_001025704.1">
    <molecule id="Q4U116-2"/>
    <property type="nucleotide sequence ID" value="NM_001030533.1"/>
</dbReference>
<dbReference type="SMR" id="Q4U116"/>
<dbReference type="FunCoup" id="Q4U116">
    <property type="interactions" value="338"/>
</dbReference>
<dbReference type="STRING" id="9823.ENSSSCP00000051615"/>
<dbReference type="GlyCosmos" id="Q4U116">
    <property type="glycosylation" value="2 sites, No reported glycans"/>
</dbReference>
<dbReference type="PaxDb" id="9823-ENSSSCP00000009544"/>
<dbReference type="PeptideAtlas" id="Q4U116"/>
<dbReference type="GeneID" id="503546"/>
<dbReference type="KEGG" id="ssc:503546"/>
<dbReference type="CTD" id="8671"/>
<dbReference type="eggNOG" id="KOG1172">
    <property type="taxonomic scope" value="Eukaryota"/>
</dbReference>
<dbReference type="InParanoid" id="Q4U116"/>
<dbReference type="OrthoDB" id="1735926at2759"/>
<dbReference type="Proteomes" id="UP000008227">
    <property type="component" value="Unplaced"/>
</dbReference>
<dbReference type="Proteomes" id="UP000314985">
    <property type="component" value="Unplaced"/>
</dbReference>
<dbReference type="Proteomes" id="UP000694570">
    <property type="component" value="Unplaced"/>
</dbReference>
<dbReference type="Proteomes" id="UP000694571">
    <property type="component" value="Unplaced"/>
</dbReference>
<dbReference type="Proteomes" id="UP000694720">
    <property type="component" value="Unplaced"/>
</dbReference>
<dbReference type="Proteomes" id="UP000694722">
    <property type="component" value="Unplaced"/>
</dbReference>
<dbReference type="Proteomes" id="UP000694723">
    <property type="component" value="Unplaced"/>
</dbReference>
<dbReference type="Proteomes" id="UP000694724">
    <property type="component" value="Unplaced"/>
</dbReference>
<dbReference type="Proteomes" id="UP000694725">
    <property type="component" value="Unplaced"/>
</dbReference>
<dbReference type="Proteomes" id="UP000694726">
    <property type="component" value="Unplaced"/>
</dbReference>
<dbReference type="Proteomes" id="UP000694727">
    <property type="component" value="Unplaced"/>
</dbReference>
<dbReference type="Proteomes" id="UP000694728">
    <property type="component" value="Unplaced"/>
</dbReference>
<dbReference type="GO" id="GO:0016323">
    <property type="term" value="C:basolateral plasma membrane"/>
    <property type="evidence" value="ECO:0000250"/>
    <property type="project" value="UniProtKB"/>
</dbReference>
<dbReference type="GO" id="GO:0005886">
    <property type="term" value="C:plasma membrane"/>
    <property type="evidence" value="ECO:0000318"/>
    <property type="project" value="GO_Central"/>
</dbReference>
<dbReference type="GO" id="GO:0008509">
    <property type="term" value="F:monoatomic anion transmembrane transporter activity"/>
    <property type="evidence" value="ECO:0007669"/>
    <property type="project" value="InterPro"/>
</dbReference>
<dbReference type="GO" id="GO:0008510">
    <property type="term" value="F:sodium:bicarbonate symporter activity"/>
    <property type="evidence" value="ECO:0000250"/>
    <property type="project" value="UniProtKB"/>
</dbReference>
<dbReference type="GO" id="GO:0005452">
    <property type="term" value="F:solute:inorganic anion antiporter activity"/>
    <property type="evidence" value="ECO:0007669"/>
    <property type="project" value="InterPro"/>
</dbReference>
<dbReference type="GO" id="GO:0015701">
    <property type="term" value="P:bicarbonate transport"/>
    <property type="evidence" value="ECO:0000318"/>
    <property type="project" value="GO_Central"/>
</dbReference>
<dbReference type="GO" id="GO:0051453">
    <property type="term" value="P:regulation of intracellular pH"/>
    <property type="evidence" value="ECO:0000318"/>
    <property type="project" value="GO_Central"/>
</dbReference>
<dbReference type="GO" id="GO:0006814">
    <property type="term" value="P:sodium ion transport"/>
    <property type="evidence" value="ECO:0000250"/>
    <property type="project" value="UniProtKB"/>
</dbReference>
<dbReference type="GO" id="GO:0055085">
    <property type="term" value="P:transmembrane transport"/>
    <property type="evidence" value="ECO:0000318"/>
    <property type="project" value="GO_Central"/>
</dbReference>
<dbReference type="FunFam" id="1.10.287.570:FF:000001">
    <property type="entry name" value="Anion exchange protein"/>
    <property type="match status" value="1"/>
</dbReference>
<dbReference type="FunFam" id="3.40.930.10:FF:000002">
    <property type="entry name" value="Anion exchange protein"/>
    <property type="match status" value="1"/>
</dbReference>
<dbReference type="Gene3D" id="1.10.287.570">
    <property type="entry name" value="Helical hairpin bin"/>
    <property type="match status" value="1"/>
</dbReference>
<dbReference type="Gene3D" id="3.40.930.10">
    <property type="entry name" value="Mannitol-specific EII, Chain A"/>
    <property type="match status" value="1"/>
</dbReference>
<dbReference type="InterPro" id="IPR013769">
    <property type="entry name" value="Band3_cytoplasmic_dom"/>
</dbReference>
<dbReference type="InterPro" id="IPR011531">
    <property type="entry name" value="HCO3_transpt-like_TM_dom"/>
</dbReference>
<dbReference type="InterPro" id="IPR003020">
    <property type="entry name" value="HCO3_transpt_euk"/>
</dbReference>
<dbReference type="InterPro" id="IPR003024">
    <property type="entry name" value="Na/HCO3_transpt"/>
</dbReference>
<dbReference type="InterPro" id="IPR016152">
    <property type="entry name" value="PTrfase/Anion_transptr"/>
</dbReference>
<dbReference type="NCBIfam" id="TIGR00834">
    <property type="entry name" value="ae"/>
    <property type="match status" value="1"/>
</dbReference>
<dbReference type="PANTHER" id="PTHR11453">
    <property type="entry name" value="ANION EXCHANGE PROTEIN"/>
    <property type="match status" value="1"/>
</dbReference>
<dbReference type="PANTHER" id="PTHR11453:SF10">
    <property type="entry name" value="ELECTROGENIC SODIUM BICARBONATE COTRANSPORTER 1"/>
    <property type="match status" value="1"/>
</dbReference>
<dbReference type="Pfam" id="PF07565">
    <property type="entry name" value="Band_3_cyto"/>
    <property type="match status" value="1"/>
</dbReference>
<dbReference type="Pfam" id="PF00955">
    <property type="entry name" value="HCO3_cotransp"/>
    <property type="match status" value="1"/>
</dbReference>
<dbReference type="PRINTS" id="PR01231">
    <property type="entry name" value="HCO3TRNSPORT"/>
</dbReference>
<dbReference type="PRINTS" id="PR01232">
    <property type="entry name" value="NAHCO3TRSPRT"/>
</dbReference>
<dbReference type="SUPFAM" id="SSF55804">
    <property type="entry name" value="Phoshotransferase/anion transport protein"/>
    <property type="match status" value="1"/>
</dbReference>
<protein>
    <recommendedName>
        <fullName>Electrogenic sodium bicarbonate cotransporter 1</fullName>
        <shortName>Sodium bicarbonate cotransporter</shortName>
    </recommendedName>
    <alternativeName>
        <fullName>Na(+)/HCO3(-) cotransporter</fullName>
    </alternativeName>
    <alternativeName>
        <fullName>Solute carrier family 4 member 4</fullName>
    </alternativeName>
</protein>
<keyword id="KW-0025">Alternative splicing</keyword>
<keyword id="KW-1003">Cell membrane</keyword>
<keyword id="KW-0325">Glycoprotein</keyword>
<keyword id="KW-0406">Ion transport</keyword>
<keyword id="KW-0472">Membrane</keyword>
<keyword id="KW-0597">Phosphoprotein</keyword>
<keyword id="KW-1185">Reference proteome</keyword>
<keyword id="KW-0915">Sodium</keyword>
<keyword id="KW-0739">Sodium transport</keyword>
<keyword id="KW-0769">Symport</keyword>
<keyword id="KW-0812">Transmembrane</keyword>
<keyword id="KW-1133">Transmembrane helix</keyword>
<keyword id="KW-0813">Transport</keyword>
<name>S4A4_PIG</name>
<reference key="1">
    <citation type="submission" date="2005-04" db="EMBL/GenBank/DDBJ databases">
        <title>Na(+)-HCO cotransporters in porcine vas deferens epithelia.</title>
        <authorList>
            <person name="Pierucci-Alves F."/>
            <person name="O'Leary T.L."/>
            <person name="Lorenzen M.D."/>
            <person name="Schultz B.D."/>
        </authorList>
    </citation>
    <scope>NUCLEOTIDE SEQUENCE [MRNA] (ISOFORMS 1 AND 2)</scope>
</reference>
<reference key="2">
    <citation type="journal article" date="2002" name="Am. J. Physiol.">
        <title>Functional and molecular evidence for Na(+)-HCO cotransporter in porcine vas deferens epithelia.</title>
        <authorList>
            <person name="Carlin R.W."/>
            <person name="Quesnell R.R."/>
            <person name="Zheng L."/>
            <person name="Mitchell K.E."/>
            <person name="Schultz B.D."/>
        </authorList>
    </citation>
    <scope>NUCLEOTIDE SEQUENCE [MRNA] OF 894-985</scope>
    <scope>TISSUE SPECIFICITY</scope>
    <source>
        <tissue>Vas deferens</tissue>
    </source>
</reference>